<accession>Q9QYV0</accession>
<accession>Q6P779</accession>
<protein>
    <recommendedName>
        <fullName>Disintegrin and metalloproteinase domain-containing protein 15</fullName>
        <shortName>ADAM 15</shortName>
        <ecNumber>3.4.24.-</ecNumber>
    </recommendedName>
    <alternativeName>
        <fullName>CRII-7</fullName>
    </alternativeName>
    <alternativeName>
        <fullName>Metalloprotease RGD disintegrin protein</fullName>
    </alternativeName>
    <alternativeName>
        <fullName>Metalloproteinase-like, disintegrin-like, and cysteine-rich protein 15</fullName>
        <shortName>MDC-15</shortName>
    </alternativeName>
    <alternativeName>
        <fullName>Metargidin</fullName>
    </alternativeName>
</protein>
<gene>
    <name type="primary">Adam15</name>
    <name type="synonym">Mdc15</name>
</gene>
<reference key="1">
    <citation type="journal article" date="2000" name="Glia">
        <title>Cellular localization of the disintegrin CRII-7/rMDC15 mRNA in rat PNS and CNS and regulated expression in postnatal development and after nerve injury.</title>
        <authorList>
            <person name="Bosse F."/>
            <person name="Petzold G."/>
            <person name="Greiner-Petter R."/>
            <person name="Pippirs U."/>
            <person name="Gillen C."/>
            <person name="Mueller H.-W."/>
        </authorList>
    </citation>
    <scope>NUCLEOTIDE SEQUENCE [MRNA] (ISOFORM 2)</scope>
    <source>
        <tissue>Sciatic nerve</tissue>
    </source>
</reference>
<reference key="2">
    <citation type="journal article" date="2004" name="Genome Res.">
        <title>The status, quality, and expansion of the NIH full-length cDNA project: the Mammalian Gene Collection (MGC).</title>
        <authorList>
            <consortium name="The MGC Project Team"/>
        </authorList>
    </citation>
    <scope>NUCLEOTIDE SEQUENCE [LARGE SCALE MRNA] (ISOFORM 1)</scope>
    <source>
        <tissue>Prostate</tissue>
    </source>
</reference>
<sequence>MRLALLWALGLLGAGSPRPSPPLPNIGGTEEEQQASPERTQSRSLENQVVQDSPPINLTEVLQTGLPETLRIGLELDGENHILELQQNRDLVPGRPTLVWYQPDGTRMVSEGHSLENCCYRGRVQGRPSSWVSLCACSGIRGLVVLSPERSYTLELGPGDLQRPLIVSRIQDLLLPGHTCAPSWHAFVPTEAAPDLLLEQHHLRRLKRDVVTETKIVELVIVADNSEVRKYPDFQQLLNRTLEVALLLDTFFQPLNVRVALVGLEAWTQRDLIEMSSNPAVLLDNFLRWRRTDLLPRLPHDSAQLVTVTSFSGPMVGMAIQNSICSPDFSGGVNMDHSTSILGVASSIAHELGHSLGLDHDSPGNSCPCPGPAPAKSCIMEASTDFLPGLNFSNCSRWALEKALLDGMGSCLFEWPPSRAPMSSLCGNMFVDPGEQCDCGFPDECTDPCCDYFTCQLRPGAQCASDGPCCQNCKLQPAGWQCRLPTDDCDLPEFCLGDSSQCPPDIRLGDGEPCASGEAVCMHGRCASYTRQCQSLWGPGAQPAAPLCLQTANTRGNAFGSCGRSPSGSYMPCNLRDAICGQLQCQWGRNQPLLGSVQDQLSEVLEANGTQLNCSWVDLDLGNDVAQPLLALPGTACGPGLVCIGHRCQPVDLLGAQECRSKCHGHGVCDSSRHCHCDEGWAPPDCMTQLRATSSLTTGLLLSLLLLLVLVLLGASYWYRARLHQRLCQLKGSSCQYRAAQSGPPERPGPPQRAQQMPGTKQANVSFPVPPSRPLPPNPVPKKLQAELADRSNPPTRPLPADPVVWRPKPQGPTKPPPPRKPLPANPQGRPPLGDLPGPGDGSLQLVVPSRPAPPPPAASSLYL</sequence>
<name>ADA15_RAT</name>
<proteinExistence type="evidence at transcript level"/>
<evidence type="ECO:0000250" key="1"/>
<evidence type="ECO:0000250" key="2">
    <source>
        <dbReference type="UniProtKB" id="Q13444"/>
    </source>
</evidence>
<evidence type="ECO:0000255" key="3"/>
<evidence type="ECO:0000255" key="4">
    <source>
        <dbReference type="PROSITE-ProRule" id="PRU00068"/>
    </source>
</evidence>
<evidence type="ECO:0000255" key="5">
    <source>
        <dbReference type="PROSITE-ProRule" id="PRU00076"/>
    </source>
</evidence>
<evidence type="ECO:0000255" key="6">
    <source>
        <dbReference type="PROSITE-ProRule" id="PRU00276"/>
    </source>
</evidence>
<evidence type="ECO:0000255" key="7">
    <source>
        <dbReference type="PROSITE-ProRule" id="PRU10095"/>
    </source>
</evidence>
<evidence type="ECO:0000256" key="8">
    <source>
        <dbReference type="SAM" id="MobiDB-lite"/>
    </source>
</evidence>
<evidence type="ECO:0000303" key="9">
    <source>
    </source>
</evidence>
<evidence type="ECO:0000305" key="10"/>
<organism>
    <name type="scientific">Rattus norvegicus</name>
    <name type="common">Rat</name>
    <dbReference type="NCBI Taxonomy" id="10116"/>
    <lineage>
        <taxon>Eukaryota</taxon>
        <taxon>Metazoa</taxon>
        <taxon>Chordata</taxon>
        <taxon>Craniata</taxon>
        <taxon>Vertebrata</taxon>
        <taxon>Euteleostomi</taxon>
        <taxon>Mammalia</taxon>
        <taxon>Eutheria</taxon>
        <taxon>Euarchontoglires</taxon>
        <taxon>Glires</taxon>
        <taxon>Rodentia</taxon>
        <taxon>Myomorpha</taxon>
        <taxon>Muroidea</taxon>
        <taxon>Muridae</taxon>
        <taxon>Murinae</taxon>
        <taxon>Rattus</taxon>
    </lineage>
</organism>
<feature type="signal peptide" evidence="3">
    <location>
        <begin position="1"/>
        <end position="17"/>
    </location>
</feature>
<feature type="propeptide" id="PRO_0000029086" evidence="1">
    <location>
        <begin position="18"/>
        <end position="208"/>
    </location>
</feature>
<feature type="chain" id="PRO_0000029087" description="Disintegrin and metalloproteinase domain-containing protein 15">
    <location>
        <begin position="209"/>
        <end position="864"/>
    </location>
</feature>
<feature type="topological domain" description="Extracellular" evidence="3">
    <location>
        <begin position="209"/>
        <end position="698"/>
    </location>
</feature>
<feature type="transmembrane region" description="Helical" evidence="3">
    <location>
        <begin position="699"/>
        <end position="719"/>
    </location>
</feature>
<feature type="topological domain" description="Cytoplasmic" evidence="3">
    <location>
        <begin position="720"/>
        <end position="864"/>
    </location>
</feature>
<feature type="domain" description="Peptidase M12B" evidence="6">
    <location>
        <begin position="215"/>
        <end position="416"/>
    </location>
</feature>
<feature type="domain" description="Disintegrin" evidence="4">
    <location>
        <begin position="423"/>
        <end position="510"/>
    </location>
</feature>
<feature type="domain" description="EGF-like" evidence="5">
    <location>
        <begin position="659"/>
        <end position="687"/>
    </location>
</feature>
<feature type="region of interest" description="Disordered" evidence="8">
    <location>
        <begin position="17"/>
        <end position="49"/>
    </location>
</feature>
<feature type="region of interest" description="Disordered" evidence="8">
    <location>
        <begin position="738"/>
        <end position="864"/>
    </location>
</feature>
<feature type="short sequence motif" description="Cysteine switch" evidence="1">
    <location>
        <begin position="178"/>
        <end position="185"/>
    </location>
</feature>
<feature type="short sequence motif" description="SH3-binding" evidence="3">
    <location>
        <begin position="816"/>
        <end position="822"/>
    </location>
</feature>
<feature type="short sequence motif" description="SH3-binding" evidence="3">
    <location>
        <begin position="851"/>
        <end position="857"/>
    </location>
</feature>
<feature type="compositionally biased region" description="Polar residues" evidence="8">
    <location>
        <begin position="34"/>
        <end position="49"/>
    </location>
</feature>
<feature type="compositionally biased region" description="Polar residues" evidence="8">
    <location>
        <begin position="753"/>
        <end position="765"/>
    </location>
</feature>
<feature type="compositionally biased region" description="Pro residues" evidence="8">
    <location>
        <begin position="768"/>
        <end position="780"/>
    </location>
</feature>
<feature type="compositionally biased region" description="Pro residues" evidence="8">
    <location>
        <begin position="810"/>
        <end position="825"/>
    </location>
</feature>
<feature type="compositionally biased region" description="Low complexity" evidence="8">
    <location>
        <begin position="826"/>
        <end position="850"/>
    </location>
</feature>
<feature type="active site" evidence="6 7">
    <location>
        <position position="351"/>
    </location>
</feature>
<feature type="binding site" description="in inhibited form" evidence="1">
    <location>
        <position position="180"/>
    </location>
    <ligand>
        <name>Zn(2+)</name>
        <dbReference type="ChEBI" id="CHEBI:29105"/>
        <note>catalytic</note>
    </ligand>
</feature>
<feature type="binding site" evidence="3">
    <location>
        <position position="350"/>
    </location>
    <ligand>
        <name>Zn(2+)</name>
        <dbReference type="ChEBI" id="CHEBI:29105"/>
        <note>catalytic</note>
    </ligand>
</feature>
<feature type="binding site" evidence="3">
    <location>
        <position position="354"/>
    </location>
    <ligand>
        <name>Zn(2+)</name>
        <dbReference type="ChEBI" id="CHEBI:29105"/>
        <note>catalytic</note>
    </ligand>
</feature>
<feature type="binding site" evidence="3">
    <location>
        <position position="360"/>
    </location>
    <ligand>
        <name>Zn(2+)</name>
        <dbReference type="ChEBI" id="CHEBI:29105"/>
        <note>catalytic</note>
    </ligand>
</feature>
<feature type="modified residue" description="Phosphotyrosine; by HCK and LCK" evidence="2">
    <location>
        <position position="717"/>
    </location>
</feature>
<feature type="modified residue" description="Phosphotyrosine; by HCK and LCK" evidence="2">
    <location>
        <position position="737"/>
    </location>
</feature>
<feature type="glycosylation site" description="N-linked (GlcNAc...) asparagine" evidence="3">
    <location>
        <position position="57"/>
    </location>
</feature>
<feature type="glycosylation site" description="N-linked (GlcNAc...) asparagine" evidence="3">
    <location>
        <position position="239"/>
    </location>
</feature>
<feature type="glycosylation site" description="N-linked (GlcNAc...) asparagine" evidence="3">
    <location>
        <position position="391"/>
    </location>
</feature>
<feature type="glycosylation site" description="N-linked (GlcNAc...) asparagine" evidence="3">
    <location>
        <position position="394"/>
    </location>
</feature>
<feature type="glycosylation site" description="N-linked (GlcNAc...) asparagine" evidence="3">
    <location>
        <position position="608"/>
    </location>
</feature>
<feature type="glycosylation site" description="N-linked (GlcNAc...) asparagine" evidence="3">
    <location>
        <position position="613"/>
    </location>
</feature>
<feature type="disulfide bond" evidence="1">
    <location>
        <begin position="325"/>
        <end position="411"/>
    </location>
</feature>
<feature type="disulfide bond" evidence="1">
    <location>
        <begin position="367"/>
        <end position="395"/>
    </location>
</feature>
<feature type="disulfide bond" evidence="1">
    <location>
        <begin position="369"/>
        <end position="378"/>
    </location>
</feature>
<feature type="disulfide bond" evidence="1">
    <location>
        <begin position="482"/>
        <end position="502"/>
    </location>
</feature>
<feature type="disulfide bond" evidence="1">
    <location>
        <begin position="659"/>
        <end position="669"/>
    </location>
</feature>
<feature type="disulfide bond" evidence="1">
    <location>
        <begin position="663"/>
        <end position="675"/>
    </location>
</feature>
<feature type="disulfide bond" evidence="1">
    <location>
        <begin position="677"/>
        <end position="686"/>
    </location>
</feature>
<feature type="splice variant" id="VSP_039534" description="In isoform 2." evidence="9">
    <location>
        <begin position="762"/>
        <end position="809"/>
    </location>
</feature>
<feature type="sequence conflict" description="In Ref. 2; AAH61796." evidence="10" ref="2">
    <original>H</original>
    <variation>R</variation>
    <location>
        <position position="202"/>
    </location>
</feature>
<keyword id="KW-0025">Alternative splicing</keyword>
<keyword id="KW-0037">Angiogenesis</keyword>
<keyword id="KW-0130">Cell adhesion</keyword>
<keyword id="KW-0965">Cell junction</keyword>
<keyword id="KW-0966">Cell projection</keyword>
<keyword id="KW-0969">Cilium</keyword>
<keyword id="KW-0165">Cleavage on pair of basic residues</keyword>
<keyword id="KW-0177">Collagen degradation</keyword>
<keyword id="KW-0968">Cytoplasmic vesicle</keyword>
<keyword id="KW-1015">Disulfide bond</keyword>
<keyword id="KW-0245">EGF-like domain</keyword>
<keyword id="KW-0282">Flagellum</keyword>
<keyword id="KW-0325">Glycoprotein</keyword>
<keyword id="KW-0378">Hydrolase</keyword>
<keyword id="KW-0472">Membrane</keyword>
<keyword id="KW-0479">Metal-binding</keyword>
<keyword id="KW-0482">Metalloprotease</keyword>
<keyword id="KW-0597">Phosphoprotein</keyword>
<keyword id="KW-0645">Protease</keyword>
<keyword id="KW-1185">Reference proteome</keyword>
<keyword id="KW-0729">SH3-binding</keyword>
<keyword id="KW-0732">Signal</keyword>
<keyword id="KW-0812">Transmembrane</keyword>
<keyword id="KW-1133">Transmembrane helix</keyword>
<keyword id="KW-0862">Zinc</keyword>
<keyword id="KW-0865">Zymogen</keyword>
<dbReference type="EC" id="3.4.24.-"/>
<dbReference type="EMBL" id="AJ251198">
    <property type="protein sequence ID" value="CAB61762.1"/>
    <property type="molecule type" value="mRNA"/>
</dbReference>
<dbReference type="EMBL" id="BC061796">
    <property type="protein sequence ID" value="AAH61796.1"/>
    <property type="molecule type" value="mRNA"/>
</dbReference>
<dbReference type="RefSeq" id="NP_001386057.1">
    <molecule id="Q9QYV0-1"/>
    <property type="nucleotide sequence ID" value="NM_001399128.1"/>
</dbReference>
<dbReference type="RefSeq" id="NP_064704.1">
    <molecule id="Q9QYV0-2"/>
    <property type="nucleotide sequence ID" value="NM_020308.2"/>
</dbReference>
<dbReference type="RefSeq" id="XP_006232804.1">
    <property type="nucleotide sequence ID" value="XM_006232742.3"/>
</dbReference>
<dbReference type="SMR" id="Q9QYV0"/>
<dbReference type="BioGRID" id="248604">
    <property type="interactions" value="1"/>
</dbReference>
<dbReference type="FunCoup" id="Q9QYV0">
    <property type="interactions" value="589"/>
</dbReference>
<dbReference type="STRING" id="10116.ENSRNOP00000039351"/>
<dbReference type="ChEMBL" id="CHEMBL4802019"/>
<dbReference type="MEROPS" id="M12.215"/>
<dbReference type="GlyCosmos" id="Q9QYV0">
    <property type="glycosylation" value="6 sites, No reported glycans"/>
</dbReference>
<dbReference type="GlyGen" id="Q9QYV0">
    <property type="glycosylation" value="6 sites"/>
</dbReference>
<dbReference type="PhosphoSitePlus" id="Q9QYV0"/>
<dbReference type="SwissPalm" id="Q9QYV0"/>
<dbReference type="PaxDb" id="10116-ENSRNOP00000039351"/>
<dbReference type="Ensembl" id="ENSRNOT00000027970.5">
    <molecule id="Q9QYV0-2"/>
    <property type="protein sequence ID" value="ENSRNOP00000027970.2"/>
    <property type="gene ID" value="ENSRNOG00000020590.9"/>
</dbReference>
<dbReference type="Ensembl" id="ENSRNOT00000050868.5">
    <molecule id="Q9QYV0-1"/>
    <property type="protein sequence ID" value="ENSRNOP00000039351.2"/>
    <property type="gene ID" value="ENSRNOG00000020590.9"/>
</dbReference>
<dbReference type="GeneID" id="57025"/>
<dbReference type="KEGG" id="rno:57025"/>
<dbReference type="UCSC" id="RGD:620402">
    <molecule id="Q9QYV0-1"/>
    <property type="organism name" value="rat"/>
</dbReference>
<dbReference type="AGR" id="RGD:620402"/>
<dbReference type="CTD" id="8751"/>
<dbReference type="RGD" id="620402">
    <property type="gene designation" value="Adam15"/>
</dbReference>
<dbReference type="eggNOG" id="KOG3607">
    <property type="taxonomic scope" value="Eukaryota"/>
</dbReference>
<dbReference type="GeneTree" id="ENSGT00940000159822"/>
<dbReference type="HOGENOM" id="CLU_012714_7_2_1"/>
<dbReference type="InParanoid" id="Q9QYV0"/>
<dbReference type="OMA" id="HADSWAS"/>
<dbReference type="PhylomeDB" id="Q9QYV0"/>
<dbReference type="TreeFam" id="TF314733"/>
<dbReference type="Reactome" id="R-RNO-1474228">
    <property type="pathway name" value="Degradation of the extracellular matrix"/>
</dbReference>
<dbReference type="Reactome" id="R-RNO-8941237">
    <property type="pathway name" value="Invadopodia formation"/>
</dbReference>
<dbReference type="PRO" id="PR:Q9QYV0"/>
<dbReference type="Proteomes" id="UP000002494">
    <property type="component" value="Chromosome 2"/>
</dbReference>
<dbReference type="Bgee" id="ENSRNOG00000020590">
    <property type="expression patterns" value="Expressed in esophagus and 19 other cell types or tissues"/>
</dbReference>
<dbReference type="GO" id="GO:0001669">
    <property type="term" value="C:acrosomal vesicle"/>
    <property type="evidence" value="ECO:0007669"/>
    <property type="project" value="UniProtKB-SubCell"/>
</dbReference>
<dbReference type="GO" id="GO:0005912">
    <property type="term" value="C:adherens junction"/>
    <property type="evidence" value="ECO:0007669"/>
    <property type="project" value="UniProtKB-SubCell"/>
</dbReference>
<dbReference type="GO" id="GO:0009986">
    <property type="term" value="C:cell surface"/>
    <property type="evidence" value="ECO:0000266"/>
    <property type="project" value="RGD"/>
</dbReference>
<dbReference type="GO" id="GO:0070062">
    <property type="term" value="C:extracellular exosome"/>
    <property type="evidence" value="ECO:0000266"/>
    <property type="project" value="RGD"/>
</dbReference>
<dbReference type="GO" id="GO:0005615">
    <property type="term" value="C:extracellular space"/>
    <property type="evidence" value="ECO:0000318"/>
    <property type="project" value="GO_Central"/>
</dbReference>
<dbReference type="GO" id="GO:0016020">
    <property type="term" value="C:membrane"/>
    <property type="evidence" value="ECO:0007669"/>
    <property type="project" value="UniProtKB-KW"/>
</dbReference>
<dbReference type="GO" id="GO:0031514">
    <property type="term" value="C:motile cilium"/>
    <property type="evidence" value="ECO:0007669"/>
    <property type="project" value="UniProtKB-SubCell"/>
</dbReference>
<dbReference type="GO" id="GO:0034987">
    <property type="term" value="F:immunoglobulin receptor binding"/>
    <property type="evidence" value="ECO:0000266"/>
    <property type="project" value="RGD"/>
</dbReference>
<dbReference type="GO" id="GO:0005178">
    <property type="term" value="F:integrin binding"/>
    <property type="evidence" value="ECO:0000266"/>
    <property type="project" value="RGD"/>
</dbReference>
<dbReference type="GO" id="GO:0046872">
    <property type="term" value="F:metal ion binding"/>
    <property type="evidence" value="ECO:0007669"/>
    <property type="project" value="UniProtKB-KW"/>
</dbReference>
<dbReference type="GO" id="GO:0004222">
    <property type="term" value="F:metalloendopeptidase activity"/>
    <property type="evidence" value="ECO:0000318"/>
    <property type="project" value="GO_Central"/>
</dbReference>
<dbReference type="GO" id="GO:0008237">
    <property type="term" value="F:metallopeptidase activity"/>
    <property type="evidence" value="ECO:0000266"/>
    <property type="project" value="RGD"/>
</dbReference>
<dbReference type="GO" id="GO:0017124">
    <property type="term" value="F:SH3 domain binding"/>
    <property type="evidence" value="ECO:0000266"/>
    <property type="project" value="RGD"/>
</dbReference>
<dbReference type="GO" id="GO:0001525">
    <property type="term" value="P:angiogenesis"/>
    <property type="evidence" value="ECO:0007669"/>
    <property type="project" value="UniProtKB-KW"/>
</dbReference>
<dbReference type="GO" id="GO:0060317">
    <property type="term" value="P:cardiac epithelial to mesenchymal transition"/>
    <property type="evidence" value="ECO:0000266"/>
    <property type="project" value="RGD"/>
</dbReference>
<dbReference type="GO" id="GO:0098609">
    <property type="term" value="P:cell-cell adhesion"/>
    <property type="evidence" value="ECO:0000304"/>
    <property type="project" value="RGD"/>
</dbReference>
<dbReference type="GO" id="GO:1904628">
    <property type="term" value="P:cellular response to phorbol 13-acetate 12-myristate"/>
    <property type="evidence" value="ECO:0000266"/>
    <property type="project" value="RGD"/>
</dbReference>
<dbReference type="GO" id="GO:0030574">
    <property type="term" value="P:collagen catabolic process"/>
    <property type="evidence" value="ECO:0007669"/>
    <property type="project" value="UniProtKB-KW"/>
</dbReference>
<dbReference type="GO" id="GO:0002418">
    <property type="term" value="P:immune response to tumor cell"/>
    <property type="evidence" value="ECO:0000266"/>
    <property type="project" value="RGD"/>
</dbReference>
<dbReference type="GO" id="GO:0045087">
    <property type="term" value="P:innate immune response"/>
    <property type="evidence" value="ECO:0000266"/>
    <property type="project" value="RGD"/>
</dbReference>
<dbReference type="GO" id="GO:0007229">
    <property type="term" value="P:integrin-mediated signaling pathway"/>
    <property type="evidence" value="ECO:0000266"/>
    <property type="project" value="RGD"/>
</dbReference>
<dbReference type="GO" id="GO:0008584">
    <property type="term" value="P:male gonad development"/>
    <property type="evidence" value="ECO:0000270"/>
    <property type="project" value="RGD"/>
</dbReference>
<dbReference type="GO" id="GO:0030308">
    <property type="term" value="P:negative regulation of cell growth"/>
    <property type="evidence" value="ECO:0000266"/>
    <property type="project" value="RGD"/>
</dbReference>
<dbReference type="GO" id="GO:0030336">
    <property type="term" value="P:negative regulation of cell migration"/>
    <property type="evidence" value="ECO:0000266"/>
    <property type="project" value="RGD"/>
</dbReference>
<dbReference type="GO" id="GO:0001953">
    <property type="term" value="P:negative regulation of cell-matrix adhesion"/>
    <property type="evidence" value="ECO:0000266"/>
    <property type="project" value="RGD"/>
</dbReference>
<dbReference type="GO" id="GO:0006508">
    <property type="term" value="P:proteolysis"/>
    <property type="evidence" value="ECO:0000318"/>
    <property type="project" value="GO_Central"/>
</dbReference>
<dbReference type="GO" id="GO:1990910">
    <property type="term" value="P:response to hypobaric hypoxia"/>
    <property type="evidence" value="ECO:0000270"/>
    <property type="project" value="RGD"/>
</dbReference>
<dbReference type="GO" id="GO:0042246">
    <property type="term" value="P:tissue regeneration"/>
    <property type="evidence" value="ECO:0000270"/>
    <property type="project" value="RGD"/>
</dbReference>
<dbReference type="CDD" id="cd04269">
    <property type="entry name" value="ZnMc_adamalysin_II_like"/>
    <property type="match status" value="1"/>
</dbReference>
<dbReference type="FunFam" id="3.40.390.10:FF:000014">
    <property type="entry name" value="disintegrin and metalloproteinase domain-containing protein 11"/>
    <property type="match status" value="1"/>
</dbReference>
<dbReference type="FunFam" id="4.10.70.10:FF:000001">
    <property type="entry name" value="Disintegrin and metalloproteinase domain-containing protein 22"/>
    <property type="match status" value="1"/>
</dbReference>
<dbReference type="Gene3D" id="3.40.390.10">
    <property type="entry name" value="Collagenase (Catalytic Domain)"/>
    <property type="match status" value="1"/>
</dbReference>
<dbReference type="Gene3D" id="4.10.70.10">
    <property type="entry name" value="Disintegrin domain"/>
    <property type="match status" value="1"/>
</dbReference>
<dbReference type="Gene3D" id="2.60.120.260">
    <property type="entry name" value="Galactose-binding domain-like"/>
    <property type="match status" value="1"/>
</dbReference>
<dbReference type="InterPro" id="IPR006586">
    <property type="entry name" value="ADAM_Cys-rich"/>
</dbReference>
<dbReference type="InterPro" id="IPR001762">
    <property type="entry name" value="Disintegrin_dom"/>
</dbReference>
<dbReference type="InterPro" id="IPR036436">
    <property type="entry name" value="Disintegrin_dom_sf"/>
</dbReference>
<dbReference type="InterPro" id="IPR000742">
    <property type="entry name" value="EGF-like_dom"/>
</dbReference>
<dbReference type="InterPro" id="IPR024079">
    <property type="entry name" value="MetalloPept_cat_dom_sf"/>
</dbReference>
<dbReference type="InterPro" id="IPR001590">
    <property type="entry name" value="Peptidase_M12B"/>
</dbReference>
<dbReference type="InterPro" id="IPR002870">
    <property type="entry name" value="Peptidase_M12B_N"/>
</dbReference>
<dbReference type="InterPro" id="IPR034027">
    <property type="entry name" value="Reprolysin_adamalysin"/>
</dbReference>
<dbReference type="PANTHER" id="PTHR11905">
    <property type="entry name" value="ADAM A DISINTEGRIN AND METALLOPROTEASE DOMAIN"/>
    <property type="match status" value="1"/>
</dbReference>
<dbReference type="PANTHER" id="PTHR11905:SF130">
    <property type="entry name" value="DISINTEGRIN AND METALLOPROTEINASE DOMAIN-CONTAINING PROTEIN 15"/>
    <property type="match status" value="1"/>
</dbReference>
<dbReference type="Pfam" id="PF08516">
    <property type="entry name" value="ADAM_CR"/>
    <property type="match status" value="1"/>
</dbReference>
<dbReference type="Pfam" id="PF00200">
    <property type="entry name" value="Disintegrin"/>
    <property type="match status" value="1"/>
</dbReference>
<dbReference type="Pfam" id="PF01562">
    <property type="entry name" value="Pep_M12B_propep"/>
    <property type="match status" value="1"/>
</dbReference>
<dbReference type="Pfam" id="PF01421">
    <property type="entry name" value="Reprolysin"/>
    <property type="match status" value="1"/>
</dbReference>
<dbReference type="SMART" id="SM00608">
    <property type="entry name" value="ACR"/>
    <property type="match status" value="1"/>
</dbReference>
<dbReference type="SMART" id="SM00050">
    <property type="entry name" value="DISIN"/>
    <property type="match status" value="1"/>
</dbReference>
<dbReference type="SUPFAM" id="SSF57552">
    <property type="entry name" value="Blood coagulation inhibitor (disintegrin)"/>
    <property type="match status" value="1"/>
</dbReference>
<dbReference type="SUPFAM" id="SSF55486">
    <property type="entry name" value="Metalloproteases ('zincins'), catalytic domain"/>
    <property type="match status" value="1"/>
</dbReference>
<dbReference type="PROSITE" id="PS50215">
    <property type="entry name" value="ADAM_MEPRO"/>
    <property type="match status" value="1"/>
</dbReference>
<dbReference type="PROSITE" id="PS50214">
    <property type="entry name" value="DISINTEGRIN_2"/>
    <property type="match status" value="1"/>
</dbReference>
<dbReference type="PROSITE" id="PS01186">
    <property type="entry name" value="EGF_2"/>
    <property type="match status" value="1"/>
</dbReference>
<dbReference type="PROSITE" id="PS50026">
    <property type="entry name" value="EGF_3"/>
    <property type="match status" value="1"/>
</dbReference>
<dbReference type="PROSITE" id="PS00142">
    <property type="entry name" value="ZINC_PROTEASE"/>
    <property type="match status" value="1"/>
</dbReference>
<comment type="function">
    <text evidence="1">Active metalloproteinase with gelatinolytic and collagenolytic activity. Plays a role in the wound healing process. Mediates both heterotypic intraepithelial cell/T-cell interactions and homotypic T-cell aggregation. Inhibits beta-1 integrin-mediated cell adhesion and migration of airway smooth muscle cells. Suppresses cell motility on or towards fibronectin possibly by driving alpha-v/beta-1 integrin (ITAGV-ITGB1) cell surface expression via ERK1/2 inactivation. Cleaves E-cadherin in response to growth factor deprivation. Plays a role in glomerular cell migration. Plays a role in pathological neovascularization. May play a role in cartilage remodeling. May be proteolytically processed, during sperm epididymal maturation and the acrosome reaction. May play a role in sperm-egg binding through its disintegrin domain (By similarity).</text>
</comment>
<comment type="cofactor">
    <cofactor evidence="10">
        <name>Zn(2+)</name>
        <dbReference type="ChEBI" id="CHEBI:29105"/>
    </cofactor>
    <text evidence="10">Binds 1 zinc ion per subunit.</text>
</comment>
<comment type="subunit">
    <text evidence="1">Interacts with ITAGV-ITGB3 (vitronectin receptor). Interacts with SH3GL2 and SNX9; this interaction occurs preferentially with ADAM15 precursor, rather than the processed form, suggesting it occurs in a secretory pathway compartment prior to the medial Golgi (By similarity). Interacts with ITAG9-ITGB1. Interacts specifically with Src family protein-tyrosine kinases (PTKs). Interacts with SH3PXD2A. Interacts with ITAGV-ITGB1. Interacts with GRB2, HCK, ITSN1, ITSN2, LYN, MAPK1, MAPK3, NCF1, NCK1, nephrocystin, PTK6, SNX33, LCK and SRC (By similarity).</text>
</comment>
<comment type="subcellular location">
    <subcellularLocation>
        <location evidence="1">Endomembrane system</location>
        <topology evidence="1">Single-pass type I membrane protein</topology>
    </subcellularLocation>
    <subcellularLocation>
        <location evidence="1">Cell junction</location>
        <location evidence="1">Adherens junction</location>
    </subcellularLocation>
    <subcellularLocation>
        <location evidence="1">Cell projection</location>
        <location evidence="1">Cilium</location>
        <location evidence="1">Flagellum</location>
    </subcellularLocation>
    <subcellularLocation>
        <location evidence="1">Cytoplasmic vesicle</location>
        <location evidence="1">Secretory vesicle</location>
        <location evidence="1">Acrosome</location>
    </subcellularLocation>
    <text evidence="1">The majority of the protein is localized in a perinuclear compartment which may correspond to the trans-Golgi network or the late endosome. The pro-protein is the major detectable form on the cell surface, whereas the majority of the protein in the cell is processed (By similarity).</text>
</comment>
<comment type="alternative products">
    <event type="alternative splicing"/>
    <isoform>
        <id>Q9QYV0-1</id>
        <name>1</name>
        <sequence type="displayed"/>
    </isoform>
    <isoform>
        <id>Q9QYV0-2</id>
        <name>2</name>
        <sequence type="described" ref="VSP_039534"/>
    </isoform>
</comment>
<comment type="tissue specificity">
    <text>Predominantly expressed in brain, spinal cord, sciatic nerve and lung. Expressed at lower levels in all other tissues. In the peripheral nervous system, expressed predominantly by Schwann cells. In the central nervous system, preferentially expressed by neuronal cells.</text>
</comment>
<comment type="induction">
    <text>In response to sciatic nerve injury.</text>
</comment>
<comment type="domain">
    <text evidence="1">The cytoplasmic domain is required for SH3GL2- and SNX9-binding.</text>
</comment>
<comment type="domain">
    <text evidence="1">Disintegrin domain binds to integrin alphaV-beta3.</text>
</comment>
<comment type="domain">
    <text>The conserved cysteine present in the cysteine-switch motif binds the catalytic zinc ion, thus inhibiting the enzyme. The dissociation of the cysteine from the zinc ion upon the activation-peptide release activates the enzyme.</text>
</comment>
<comment type="PTM">
    <text evidence="1">The precursor is cleaved by a furin endopeptidase.</text>
</comment>
<comment type="PTM">
    <text evidence="1">Phosphorylation increases association with PTKs.</text>
</comment>